<comment type="function">
    <text evidence="1 7">Participates in the proteolytic processing of beta-type neuregulin isoforms which are involved in neurogenesis and synaptogenesis, suggesting a regulatory role in glial cell. Also cleaves alpha-2 macroglobulin. May be involved in osteoblast differentiation and/or osteoblast activity in bone (By similarity).</text>
</comment>
<comment type="cofactor">
    <cofactor evidence="1">
        <name>Zn(2+)</name>
        <dbReference type="ChEBI" id="CHEBI:29105"/>
    </cofactor>
    <text evidence="1">Binds 1 zinc ion per subunit.</text>
</comment>
<comment type="subunit">
    <text evidence="1">Interacts with SH3PXD2A.</text>
</comment>
<comment type="subcellular location">
    <subcellularLocation>
        <location>Membrane</location>
        <topology>Single-pass type I membrane protein</topology>
    </subcellularLocation>
</comment>
<comment type="tissue specificity">
    <text>Widely expressed, with the highest expression in bone, heart and lung, followed by brain and spleen and relatively low expression in liver, skeletal muscle, kidney and testis. In bone, primarily expressed in cell of the osteoblast lineage and not detected in mature osteoclasts.</text>
</comment>
<comment type="developmental stage">
    <text evidence="8">Expressed in the heart and in the tail bud at 8.0 dpc, and then in the cranial and dorsal root ganglia. Also expressed weakly and transiently in the intestine, lung and in bone marrow.</text>
</comment>
<comment type="induction">
    <text>By calcitriol and during osteoblast differentiation.</text>
</comment>
<comment type="domain">
    <text>The conserved cysteine present in the cysteine-switch motif binds the catalytic zinc ion, thus inhibiting the enzyme. The dissociation of the cysteine from the zinc ion upon the activation-peptide release activates the enzyme.</text>
</comment>
<comment type="PTM">
    <text evidence="1">The precursor is cleaved by a furin endopeptidase.</text>
</comment>
<protein>
    <recommendedName>
        <fullName>Disintegrin and metalloproteinase domain-containing protein 19</fullName>
        <shortName>ADAM 19</shortName>
        <ecNumber>3.4.24.-</ecNumber>
    </recommendedName>
    <alternativeName>
        <fullName>Meltrin-beta</fullName>
    </alternativeName>
</protein>
<organism>
    <name type="scientific">Mus musculus</name>
    <name type="common">Mouse</name>
    <dbReference type="NCBI Taxonomy" id="10090"/>
    <lineage>
        <taxon>Eukaryota</taxon>
        <taxon>Metazoa</taxon>
        <taxon>Chordata</taxon>
        <taxon>Craniata</taxon>
        <taxon>Vertebrata</taxon>
        <taxon>Euteleostomi</taxon>
        <taxon>Mammalia</taxon>
        <taxon>Eutheria</taxon>
        <taxon>Euarchontoglires</taxon>
        <taxon>Glires</taxon>
        <taxon>Rodentia</taxon>
        <taxon>Myomorpha</taxon>
        <taxon>Muroidea</taxon>
        <taxon>Muridae</taxon>
        <taxon>Murinae</taxon>
        <taxon>Mus</taxon>
        <taxon>Mus</taxon>
    </lineage>
</organism>
<proteinExistence type="evidence at transcript level"/>
<accession>O35674</accession>
<dbReference type="EC" id="3.4.24.-"/>
<dbReference type="EMBL" id="AF019887">
    <property type="protein sequence ID" value="AAC40037.1"/>
    <property type="molecule type" value="mRNA"/>
</dbReference>
<dbReference type="EMBL" id="D50410">
    <property type="protein sequence ID" value="BAA18923.2"/>
    <property type="molecule type" value="mRNA"/>
</dbReference>
<dbReference type="CCDS" id="CCDS24571.1"/>
<dbReference type="PIR" id="PC7067">
    <property type="entry name" value="PC7067"/>
</dbReference>
<dbReference type="RefSeq" id="NP_033746.1">
    <property type="nucleotide sequence ID" value="NM_009616.4"/>
</dbReference>
<dbReference type="SMR" id="O35674"/>
<dbReference type="BioGRID" id="197965">
    <property type="interactions" value="13"/>
</dbReference>
<dbReference type="FunCoup" id="O35674">
    <property type="interactions" value="874"/>
</dbReference>
<dbReference type="STRING" id="10090.ENSMUSP00000011400"/>
<dbReference type="MEROPS" id="M12.214"/>
<dbReference type="GlyCosmos" id="O35674">
    <property type="glycosylation" value="4 sites, No reported glycans"/>
</dbReference>
<dbReference type="GlyGen" id="O35674">
    <property type="glycosylation" value="4 sites, 2 N-linked glycans (2 sites)"/>
</dbReference>
<dbReference type="iPTMnet" id="O35674"/>
<dbReference type="PhosphoSitePlus" id="O35674"/>
<dbReference type="SwissPalm" id="O35674"/>
<dbReference type="PaxDb" id="10090-ENSMUSP00000011400"/>
<dbReference type="PeptideAtlas" id="O35674"/>
<dbReference type="ProteomicsDB" id="285548"/>
<dbReference type="DNASU" id="11492"/>
<dbReference type="Ensembl" id="ENSMUST00000011400.8">
    <property type="protein sequence ID" value="ENSMUSP00000011400.8"/>
    <property type="gene ID" value="ENSMUSG00000011256.17"/>
</dbReference>
<dbReference type="GeneID" id="11492"/>
<dbReference type="KEGG" id="mmu:11492"/>
<dbReference type="UCSC" id="uc007iny.2">
    <property type="organism name" value="mouse"/>
</dbReference>
<dbReference type="AGR" id="MGI:105377"/>
<dbReference type="CTD" id="8728"/>
<dbReference type="MGI" id="MGI:105377">
    <property type="gene designation" value="Adam19"/>
</dbReference>
<dbReference type="VEuPathDB" id="HostDB:ENSMUSG00000011256"/>
<dbReference type="eggNOG" id="KOG3607">
    <property type="taxonomic scope" value="Eukaryota"/>
</dbReference>
<dbReference type="GeneTree" id="ENSGT00940000158971"/>
<dbReference type="HOGENOM" id="CLU_012714_7_0_1"/>
<dbReference type="InParanoid" id="O35674"/>
<dbReference type="OMA" id="HGVCCEN"/>
<dbReference type="OrthoDB" id="5951731at2759"/>
<dbReference type="PhylomeDB" id="O35674"/>
<dbReference type="TreeFam" id="TF314733"/>
<dbReference type="BRENDA" id="3.4.24.B27">
    <property type="organism ID" value="3474"/>
</dbReference>
<dbReference type="Reactome" id="R-MMU-8941237">
    <property type="pathway name" value="Invadopodia formation"/>
</dbReference>
<dbReference type="Reactome" id="R-MMU-9762292">
    <property type="pathway name" value="Regulation of CDH11 function"/>
</dbReference>
<dbReference type="BioGRID-ORCS" id="11492">
    <property type="hits" value="1 hit in 79 CRISPR screens"/>
</dbReference>
<dbReference type="ChiTaRS" id="Adam19">
    <property type="organism name" value="mouse"/>
</dbReference>
<dbReference type="PRO" id="PR:O35674"/>
<dbReference type="Proteomes" id="UP000000589">
    <property type="component" value="Chromosome 11"/>
</dbReference>
<dbReference type="RNAct" id="O35674">
    <property type="molecule type" value="protein"/>
</dbReference>
<dbReference type="Bgee" id="ENSMUSG00000011256">
    <property type="expression patterns" value="Expressed in gastrula and 241 other cell types or tissues"/>
</dbReference>
<dbReference type="ExpressionAtlas" id="O35674">
    <property type="expression patterns" value="baseline and differential"/>
</dbReference>
<dbReference type="GO" id="GO:0062023">
    <property type="term" value="C:collagen-containing extracellular matrix"/>
    <property type="evidence" value="ECO:0007005"/>
    <property type="project" value="BHF-UCL"/>
</dbReference>
<dbReference type="GO" id="GO:0005794">
    <property type="term" value="C:Golgi apparatus"/>
    <property type="evidence" value="ECO:0000314"/>
    <property type="project" value="MGI"/>
</dbReference>
<dbReference type="GO" id="GO:0016020">
    <property type="term" value="C:membrane"/>
    <property type="evidence" value="ECO:0007669"/>
    <property type="project" value="UniProtKB-SubCell"/>
</dbReference>
<dbReference type="GO" id="GO:0005634">
    <property type="term" value="C:nucleus"/>
    <property type="evidence" value="ECO:0000250"/>
    <property type="project" value="UniProtKB"/>
</dbReference>
<dbReference type="GO" id="GO:0046872">
    <property type="term" value="F:metal ion binding"/>
    <property type="evidence" value="ECO:0007669"/>
    <property type="project" value="UniProtKB-KW"/>
</dbReference>
<dbReference type="GO" id="GO:0004222">
    <property type="term" value="F:metalloendopeptidase activity"/>
    <property type="evidence" value="ECO:0000250"/>
    <property type="project" value="UniProtKB"/>
</dbReference>
<dbReference type="GO" id="GO:0017124">
    <property type="term" value="F:SH3 domain binding"/>
    <property type="evidence" value="ECO:0000315"/>
    <property type="project" value="UniProtKB"/>
</dbReference>
<dbReference type="GO" id="GO:0007507">
    <property type="term" value="P:heart development"/>
    <property type="evidence" value="ECO:0000315"/>
    <property type="project" value="MGI"/>
</dbReference>
<dbReference type="GO" id="GO:0006509">
    <property type="term" value="P:membrane protein ectodomain proteolysis"/>
    <property type="evidence" value="ECO:0000314"/>
    <property type="project" value="MGI"/>
</dbReference>
<dbReference type="GO" id="GO:0001890">
    <property type="term" value="P:placenta development"/>
    <property type="evidence" value="ECO:0000250"/>
    <property type="project" value="UniProtKB"/>
</dbReference>
<dbReference type="GO" id="GO:2000049">
    <property type="term" value="P:positive regulation of cell-cell adhesion mediated by cadherin"/>
    <property type="evidence" value="ECO:0000250"/>
    <property type="project" value="UniProtKB"/>
</dbReference>
<dbReference type="GO" id="GO:0010628">
    <property type="term" value="P:positive regulation of gene expression"/>
    <property type="evidence" value="ECO:0000250"/>
    <property type="project" value="UniProtKB"/>
</dbReference>
<dbReference type="CDD" id="cd04269">
    <property type="entry name" value="ZnMc_adamalysin_II_like"/>
    <property type="match status" value="1"/>
</dbReference>
<dbReference type="FunFam" id="3.40.390.10:FF:000002">
    <property type="entry name" value="Disintegrin and metalloproteinase domain-containing protein 22"/>
    <property type="match status" value="1"/>
</dbReference>
<dbReference type="FunFam" id="4.10.70.10:FF:000001">
    <property type="entry name" value="Disintegrin and metalloproteinase domain-containing protein 22"/>
    <property type="match status" value="1"/>
</dbReference>
<dbReference type="Gene3D" id="3.40.390.10">
    <property type="entry name" value="Collagenase (Catalytic Domain)"/>
    <property type="match status" value="1"/>
</dbReference>
<dbReference type="Gene3D" id="4.10.70.10">
    <property type="entry name" value="Disintegrin domain"/>
    <property type="match status" value="1"/>
</dbReference>
<dbReference type="Gene3D" id="2.60.120.260">
    <property type="entry name" value="Galactose-binding domain-like"/>
    <property type="match status" value="1"/>
</dbReference>
<dbReference type="InterPro" id="IPR006586">
    <property type="entry name" value="ADAM_Cys-rich"/>
</dbReference>
<dbReference type="InterPro" id="IPR018358">
    <property type="entry name" value="Disintegrin_CS"/>
</dbReference>
<dbReference type="InterPro" id="IPR001762">
    <property type="entry name" value="Disintegrin_dom"/>
</dbReference>
<dbReference type="InterPro" id="IPR036436">
    <property type="entry name" value="Disintegrin_dom_sf"/>
</dbReference>
<dbReference type="InterPro" id="IPR000742">
    <property type="entry name" value="EGF-like_dom"/>
</dbReference>
<dbReference type="InterPro" id="IPR024079">
    <property type="entry name" value="MetalloPept_cat_dom_sf"/>
</dbReference>
<dbReference type="InterPro" id="IPR001590">
    <property type="entry name" value="Peptidase_M12B"/>
</dbReference>
<dbReference type="InterPro" id="IPR002870">
    <property type="entry name" value="Peptidase_M12B_N"/>
</dbReference>
<dbReference type="InterPro" id="IPR034027">
    <property type="entry name" value="Reprolysin_adamalysin"/>
</dbReference>
<dbReference type="PANTHER" id="PTHR11905">
    <property type="entry name" value="ADAM A DISINTEGRIN AND METALLOPROTEASE DOMAIN"/>
    <property type="match status" value="1"/>
</dbReference>
<dbReference type="PANTHER" id="PTHR11905:SF19">
    <property type="entry name" value="DISINTEGRIN AND METALLOPROTEINASE DOMAIN-CONTAINING PROTEIN 19"/>
    <property type="match status" value="1"/>
</dbReference>
<dbReference type="Pfam" id="PF08516">
    <property type="entry name" value="ADAM_CR"/>
    <property type="match status" value="1"/>
</dbReference>
<dbReference type="Pfam" id="PF00200">
    <property type="entry name" value="Disintegrin"/>
    <property type="match status" value="1"/>
</dbReference>
<dbReference type="Pfam" id="PF01562">
    <property type="entry name" value="Pep_M12B_propep"/>
    <property type="match status" value="1"/>
</dbReference>
<dbReference type="Pfam" id="PF01421">
    <property type="entry name" value="Reprolysin"/>
    <property type="match status" value="1"/>
</dbReference>
<dbReference type="PRINTS" id="PR00289">
    <property type="entry name" value="DISINTEGRIN"/>
</dbReference>
<dbReference type="SMART" id="SM00608">
    <property type="entry name" value="ACR"/>
    <property type="match status" value="1"/>
</dbReference>
<dbReference type="SMART" id="SM00050">
    <property type="entry name" value="DISIN"/>
    <property type="match status" value="1"/>
</dbReference>
<dbReference type="SUPFAM" id="SSF57552">
    <property type="entry name" value="Blood coagulation inhibitor (disintegrin)"/>
    <property type="match status" value="1"/>
</dbReference>
<dbReference type="SUPFAM" id="SSF55486">
    <property type="entry name" value="Metalloproteases ('zincins'), catalytic domain"/>
    <property type="match status" value="1"/>
</dbReference>
<dbReference type="PROSITE" id="PS50215">
    <property type="entry name" value="ADAM_MEPRO"/>
    <property type="match status" value="1"/>
</dbReference>
<dbReference type="PROSITE" id="PS00427">
    <property type="entry name" value="DISINTEGRIN_1"/>
    <property type="match status" value="1"/>
</dbReference>
<dbReference type="PROSITE" id="PS50214">
    <property type="entry name" value="DISINTEGRIN_2"/>
    <property type="match status" value="1"/>
</dbReference>
<dbReference type="PROSITE" id="PS01186">
    <property type="entry name" value="EGF_2"/>
    <property type="match status" value="1"/>
</dbReference>
<dbReference type="PROSITE" id="PS50026">
    <property type="entry name" value="EGF_3"/>
    <property type="match status" value="1"/>
</dbReference>
<dbReference type="PROSITE" id="PS00142">
    <property type="entry name" value="ZINC_PROTEASE"/>
    <property type="match status" value="1"/>
</dbReference>
<gene>
    <name type="primary">Adam19</name>
    <name type="synonym">Mltnb</name>
</gene>
<feature type="signal peptide" evidence="2">
    <location>
        <begin position="1"/>
        <end position="26"/>
    </location>
</feature>
<feature type="propeptide" id="PRO_0000029104" evidence="1">
    <location>
        <begin position="27"/>
        <end position="204"/>
    </location>
</feature>
<feature type="chain" id="PRO_0000029105" description="Disintegrin and metalloproteinase domain-containing protein 19">
    <location>
        <begin position="205"/>
        <end position="920"/>
    </location>
</feature>
<feature type="topological domain" description="Extracellular" evidence="2">
    <location>
        <begin position="27"/>
        <end position="703"/>
    </location>
</feature>
<feature type="transmembrane region" description="Helical" evidence="2">
    <location>
        <begin position="704"/>
        <end position="724"/>
    </location>
</feature>
<feature type="topological domain" description="Cytoplasmic" evidence="2">
    <location>
        <begin position="725"/>
        <end position="920"/>
    </location>
</feature>
<feature type="domain" description="Peptidase M12B" evidence="5">
    <location>
        <begin position="211"/>
        <end position="409"/>
    </location>
</feature>
<feature type="domain" description="Disintegrin" evidence="3">
    <location>
        <begin position="417"/>
        <end position="503"/>
    </location>
</feature>
<feature type="domain" description="EGF-like" evidence="4">
    <location>
        <begin position="654"/>
        <end position="686"/>
    </location>
</feature>
<feature type="region of interest" description="Disordered" evidence="6">
    <location>
        <begin position="755"/>
        <end position="920"/>
    </location>
</feature>
<feature type="short sequence motif" description="Cysteine switch" evidence="1">
    <location>
        <begin position="131"/>
        <end position="138"/>
    </location>
</feature>
<feature type="short sequence motif" description="SH3-binding" evidence="2">
    <location>
        <begin position="835"/>
        <end position="846"/>
    </location>
</feature>
<feature type="compositionally biased region" description="Polar residues" evidence="6">
    <location>
        <begin position="767"/>
        <end position="783"/>
    </location>
</feature>
<feature type="compositionally biased region" description="Basic and acidic residues" evidence="6">
    <location>
        <begin position="825"/>
        <end position="834"/>
    </location>
</feature>
<feature type="compositionally biased region" description="Pro residues" evidence="6">
    <location>
        <begin position="835"/>
        <end position="846"/>
    </location>
</feature>
<feature type="compositionally biased region" description="Pro residues" evidence="6">
    <location>
        <begin position="888"/>
        <end position="903"/>
    </location>
</feature>
<feature type="active site">
    <location>
        <position position="347"/>
    </location>
</feature>
<feature type="binding site" description="in inhibited form" evidence="1">
    <location>
        <position position="133"/>
    </location>
    <ligand>
        <name>Zn(2+)</name>
        <dbReference type="ChEBI" id="CHEBI:29105"/>
        <note>catalytic</note>
    </ligand>
</feature>
<feature type="binding site">
    <location>
        <position position="346"/>
    </location>
    <ligand>
        <name>Zn(2+)</name>
        <dbReference type="ChEBI" id="CHEBI:29105"/>
        <note>catalytic</note>
    </ligand>
</feature>
<feature type="binding site">
    <location>
        <position position="350"/>
    </location>
    <ligand>
        <name>Zn(2+)</name>
        <dbReference type="ChEBI" id="CHEBI:29105"/>
        <note>catalytic</note>
    </ligand>
</feature>
<feature type="binding site">
    <location>
        <position position="356"/>
    </location>
    <ligand>
        <name>Zn(2+)</name>
        <dbReference type="ChEBI" id="CHEBI:29105"/>
        <note>catalytic</note>
    </ligand>
</feature>
<feature type="glycosylation site" description="N-linked (GlcNAc...) asparagine" evidence="2">
    <location>
        <position position="145"/>
    </location>
</feature>
<feature type="glycosylation site" description="N-linked (GlcNAc...) asparagine" evidence="2">
    <location>
        <position position="445"/>
    </location>
</feature>
<feature type="glycosylation site" description="N-linked (GlcNAc...) asparagine" evidence="2">
    <location>
        <position position="448"/>
    </location>
</feature>
<feature type="glycosylation site" description="N-linked (GlcNAc...) asparagine" evidence="2">
    <location>
        <position position="649"/>
    </location>
</feature>
<feature type="disulfide bond" evidence="1">
    <location>
        <begin position="321"/>
        <end position="404"/>
    </location>
</feature>
<feature type="disulfide bond" evidence="1">
    <location>
        <begin position="361"/>
        <end position="388"/>
    </location>
</feature>
<feature type="disulfide bond" evidence="1">
    <location>
        <begin position="362"/>
        <end position="371"/>
    </location>
</feature>
<feature type="disulfide bond" evidence="1">
    <location>
        <begin position="475"/>
        <end position="495"/>
    </location>
</feature>
<feature type="disulfide bond" evidence="1">
    <location>
        <begin position="658"/>
        <end position="668"/>
    </location>
</feature>
<feature type="disulfide bond" evidence="1">
    <location>
        <begin position="662"/>
        <end position="674"/>
    </location>
</feature>
<feature type="disulfide bond" evidence="1">
    <location>
        <begin position="676"/>
        <end position="685"/>
    </location>
</feature>
<name>ADA19_MOUSE</name>
<sequence length="920" mass="100860">MPGRAGVARFCLLALALQLHWPLAACEPGWTTRGSQEGSPPLQHELIIPQWRTSESPGRGKHPLRAELRVMAEGRELILDLEKNEHLFAPAYTETCYTASGNPQTSTLKSEDHCFYHGTVRDVDESSVTLSTCRGIRGLIIVRSNLSYIIEPVPNSDSQHRIYRSEHLTLPPGNCGFEHSGPTSKDWALQFTHQTKKQPRRMKREDLHSMKYVELYLVADYAEFQKNRHDQDATKRKLMEIANYVDKFYRSLNIRIALVGLEVWTHGDKCEVSENPYSTLWSFLSWRRKLLAQKSHDNAQLITGRSFQGTTIGLAPLMAMCSVYQSGGVSMDHSENAIGVASTVAHEIGHNFGMSHDSAHCCSASAADGGCIMAAATGHPFPKVFSWCNRKELDRYLQTGGGMCLSNMPDTRTLYGGRRCGNGYLEDGEECDCGEEEECKNPCCNASNCTLKEGAECAHGSCCHQCKLVAPGTQCREQVRQCDLPEFCTGKSPHCPTNYYQMDGTPCEGGQAYCYNGMCLTYQEQCQQLWGPGARPALDLCFERVNAAGDTYGNCGKGLNGQYRKCSPRDAKCGKIQCQSTQARPLESNAVSIDTTITLNGRRIHCRGTHVYRGPEEEEGEGDMLDPGLVMTGTKCGHNHICFEGQCRNTSFFETEGCGKKCNGHGVCNNNKNCHCFPGWSPPFCNTPGDGGSVDSGPLPPKSVGPVIAGVFSALFVLAVLVLLCHCYRQSHKLGKPSALPFKLRHQFSCPFRVSQSGGTGHANPTFKLQTPQGKRKVTNTPESLRKPSHPPPRPPPDYLRVESPPAPLPAHLNRAAGSSPEAGARIERKESARRPPPSRPMPPAPNCLLSQDFSRPRPPQKALPANPVPGQRTGPRSGGTSLLQPPTSGPQPPRPPAVPVPKLPEYRSQRVGAIISSKI</sequence>
<evidence type="ECO:0000250" key="1"/>
<evidence type="ECO:0000255" key="2"/>
<evidence type="ECO:0000255" key="3">
    <source>
        <dbReference type="PROSITE-ProRule" id="PRU00068"/>
    </source>
</evidence>
<evidence type="ECO:0000255" key="4">
    <source>
        <dbReference type="PROSITE-ProRule" id="PRU00076"/>
    </source>
</evidence>
<evidence type="ECO:0000255" key="5">
    <source>
        <dbReference type="PROSITE-ProRule" id="PRU00276"/>
    </source>
</evidence>
<evidence type="ECO:0000256" key="6">
    <source>
        <dbReference type="SAM" id="MobiDB-lite"/>
    </source>
</evidence>
<evidence type="ECO:0000269" key="7">
    <source>
    </source>
</evidence>
<evidence type="ECO:0000269" key="8">
    <source>
    </source>
</evidence>
<keyword id="KW-0165">Cleavage on pair of basic residues</keyword>
<keyword id="KW-1015">Disulfide bond</keyword>
<keyword id="KW-0245">EGF-like domain</keyword>
<keyword id="KW-0325">Glycoprotein</keyword>
<keyword id="KW-0378">Hydrolase</keyword>
<keyword id="KW-0472">Membrane</keyword>
<keyword id="KW-0479">Metal-binding</keyword>
<keyword id="KW-0482">Metalloprotease</keyword>
<keyword id="KW-0645">Protease</keyword>
<keyword id="KW-1185">Reference proteome</keyword>
<keyword id="KW-0729">SH3-binding</keyword>
<keyword id="KW-0732">Signal</keyword>
<keyword id="KW-0812">Transmembrane</keyword>
<keyword id="KW-1133">Transmembrane helix</keyword>
<keyword id="KW-0862">Zinc</keyword>
<keyword id="KW-0865">Zymogen</keyword>
<reference key="1">
    <citation type="journal article" date="1998" name="J. Biol. Chem.">
        <title>Cloning and initial characterization of mouse meltrin beta and analysis of the expression of four metalloprotease-disintegrins in bone cells.</title>
        <authorList>
            <person name="Inoue D."/>
            <person name="Reid M.S."/>
            <person name="Lum L."/>
            <person name="Kraetzschmar J."/>
            <person name="Weskamp G."/>
            <person name="Myung Y.M."/>
            <person name="Baron R."/>
            <person name="Blobel C.P."/>
        </authorList>
    </citation>
    <scope>NUCLEOTIDE SEQUENCE [MRNA]</scope>
    <source>
        <tissue>Myoblast</tissue>
    </source>
</reference>
<reference key="2">
    <citation type="journal article" date="1998" name="Mech. Dev.">
        <title>Spatially- and temporally-restricted expression of meltrin alpha (ADAM12) and beta (ADAM19) in mouse embryo.</title>
        <authorList>
            <person name="Kurisaki T."/>
            <person name="Masuda A."/>
            <person name="Osumi N."/>
            <person name="Nabeshima Y."/>
            <person name="Fujisawa-Sehara A."/>
        </authorList>
    </citation>
    <scope>NUCLEOTIDE SEQUENCE [MRNA]</scope>
    <scope>DEVELOPMENTAL STAGE</scope>
    <source>
        <tissue>Myoblast</tissue>
    </source>
</reference>
<reference key="3">
    <citation type="journal article" date="1995" name="Nature">
        <title>A metalloprotease-disintegrin participating in myoblast fusion.</title>
        <authorList>
            <person name="Yagami-Hiromasa T."/>
            <person name="Sato T."/>
            <person name="Kurisaki T."/>
            <person name="Kamijo K."/>
            <person name="Nabeshima Y."/>
            <person name="Fujisawa-Sehara A."/>
        </authorList>
    </citation>
    <scope>NUCLEOTIDE SEQUENCE [MRNA] OF 429-578</scope>
    <source>
        <tissue>Embryonic fibroblast</tissue>
    </source>
</reference>
<reference key="4">
    <citation type="journal article" date="2001" name="J. Biol. Chem.">
        <title>Roles of Meltrin beta /ADAM19 in the processing of neuregulin.</title>
        <authorList>
            <person name="Shirakabe K."/>
            <person name="Wakatsuki S."/>
            <person name="Kurisaki T."/>
            <person name="Fujisawa-Sehara A."/>
        </authorList>
    </citation>
    <scope>FUNCTION</scope>
</reference>